<name>EMC4_PONAB</name>
<dbReference type="EMBL" id="CR858446">
    <property type="protein sequence ID" value="CAH90675.1"/>
    <property type="molecule type" value="mRNA"/>
</dbReference>
<dbReference type="RefSeq" id="NP_001125367.1">
    <property type="nucleotide sequence ID" value="NM_001131895.1"/>
</dbReference>
<dbReference type="SMR" id="Q5RC35"/>
<dbReference type="FunCoup" id="Q5RC35">
    <property type="interactions" value="2293"/>
</dbReference>
<dbReference type="STRING" id="9601.ENSPPYP00000007150"/>
<dbReference type="Ensembl" id="ENSPPYT00000007446.2">
    <property type="protein sequence ID" value="ENSPPYP00000007150.1"/>
    <property type="gene ID" value="ENSPPYG00000006310.2"/>
</dbReference>
<dbReference type="GeneID" id="100172270"/>
<dbReference type="KEGG" id="pon:100172270"/>
<dbReference type="CTD" id="51234"/>
<dbReference type="eggNOG" id="KOG3318">
    <property type="taxonomic scope" value="Eukaryota"/>
</dbReference>
<dbReference type="GeneTree" id="ENSGT00390000006970"/>
<dbReference type="HOGENOM" id="CLU_098404_0_1_1"/>
<dbReference type="InParanoid" id="Q5RC35"/>
<dbReference type="OMA" id="FMMWMVG"/>
<dbReference type="OrthoDB" id="369569at2759"/>
<dbReference type="TreeFam" id="TF313750"/>
<dbReference type="Proteomes" id="UP000001595">
    <property type="component" value="Chromosome 15"/>
</dbReference>
<dbReference type="GO" id="GO:0072546">
    <property type="term" value="C:EMC complex"/>
    <property type="evidence" value="ECO:0000250"/>
    <property type="project" value="UniProtKB"/>
</dbReference>
<dbReference type="GO" id="GO:0005789">
    <property type="term" value="C:endoplasmic reticulum membrane"/>
    <property type="evidence" value="ECO:0000250"/>
    <property type="project" value="UniProtKB"/>
</dbReference>
<dbReference type="GO" id="GO:0016020">
    <property type="term" value="C:membrane"/>
    <property type="evidence" value="ECO:0000250"/>
    <property type="project" value="UniProtKB"/>
</dbReference>
<dbReference type="GO" id="GO:0032977">
    <property type="term" value="F:membrane insertase activity"/>
    <property type="evidence" value="ECO:0007669"/>
    <property type="project" value="Ensembl"/>
</dbReference>
<dbReference type="GO" id="GO:0006915">
    <property type="term" value="P:apoptotic process"/>
    <property type="evidence" value="ECO:0007669"/>
    <property type="project" value="UniProtKB-KW"/>
</dbReference>
<dbReference type="GO" id="GO:0045050">
    <property type="term" value="P:protein insertion into ER membrane by stop-transfer membrane-anchor sequence"/>
    <property type="evidence" value="ECO:0000250"/>
    <property type="project" value="UniProtKB"/>
</dbReference>
<dbReference type="GO" id="GO:0071816">
    <property type="term" value="P:tail-anchored membrane protein insertion into ER membrane"/>
    <property type="evidence" value="ECO:0000250"/>
    <property type="project" value="UniProtKB"/>
</dbReference>
<dbReference type="InterPro" id="IPR009445">
    <property type="entry name" value="TMEM85/Emc4"/>
</dbReference>
<dbReference type="PANTHER" id="PTHR19315">
    <property type="entry name" value="ER MEMBRANE PROTEIN COMPLEX SUBUNIT 4"/>
    <property type="match status" value="1"/>
</dbReference>
<dbReference type="Pfam" id="PF06417">
    <property type="entry name" value="EMC4"/>
    <property type="match status" value="1"/>
</dbReference>
<dbReference type="PIRSF" id="PIRSF017207">
    <property type="entry name" value="UCP017207_TM-p85"/>
    <property type="match status" value="1"/>
</dbReference>
<organism>
    <name type="scientific">Pongo abelii</name>
    <name type="common">Sumatran orangutan</name>
    <name type="synonym">Pongo pygmaeus abelii</name>
    <dbReference type="NCBI Taxonomy" id="9601"/>
    <lineage>
        <taxon>Eukaryota</taxon>
        <taxon>Metazoa</taxon>
        <taxon>Chordata</taxon>
        <taxon>Craniata</taxon>
        <taxon>Vertebrata</taxon>
        <taxon>Euteleostomi</taxon>
        <taxon>Mammalia</taxon>
        <taxon>Eutheria</taxon>
        <taxon>Euarchontoglires</taxon>
        <taxon>Primates</taxon>
        <taxon>Haplorrhini</taxon>
        <taxon>Catarrhini</taxon>
        <taxon>Hominidae</taxon>
        <taxon>Pongo</taxon>
    </lineage>
</organism>
<reference key="1">
    <citation type="submission" date="2004-11" db="EMBL/GenBank/DDBJ databases">
        <authorList>
            <consortium name="The German cDNA consortium"/>
        </authorList>
    </citation>
    <scope>NUCLEOTIDE SEQUENCE [LARGE SCALE MRNA]</scope>
    <source>
        <tissue>Heart</tissue>
    </source>
</reference>
<evidence type="ECO:0000250" key="1">
    <source>
        <dbReference type="UniProtKB" id="Q5J8M3"/>
    </source>
</evidence>
<evidence type="ECO:0000256" key="2">
    <source>
        <dbReference type="SAM" id="MobiDB-lite"/>
    </source>
</evidence>
<evidence type="ECO:0000305" key="3"/>
<protein>
    <recommendedName>
        <fullName>ER membrane protein complex subunit 4</fullName>
    </recommendedName>
    <alternativeName>
        <fullName>Transmembrane protein 85</fullName>
    </alternativeName>
</protein>
<accession>Q5RC35</accession>
<keyword id="KW-0007">Acetylation</keyword>
<keyword id="KW-0053">Apoptosis</keyword>
<keyword id="KW-0256">Endoplasmic reticulum</keyword>
<keyword id="KW-0472">Membrane</keyword>
<keyword id="KW-0597">Phosphoprotein</keyword>
<keyword id="KW-1185">Reference proteome</keyword>
<keyword id="KW-0812">Transmembrane</keyword>
<keyword id="KW-1133">Transmembrane helix</keyword>
<gene>
    <name type="primary">EMC4</name>
    <name type="synonym">TMEM85</name>
</gene>
<proteinExistence type="evidence at transcript level"/>
<feature type="initiator methionine" description="Removed" evidence="1">
    <location>
        <position position="1"/>
    </location>
</feature>
<feature type="chain" id="PRO_0000251916" description="ER membrane protein complex subunit 4">
    <location>
        <begin position="2"/>
        <end position="183"/>
    </location>
</feature>
<feature type="topological domain" description="Cytoplasmic" evidence="1">
    <location>
        <begin position="2"/>
        <end position="66"/>
    </location>
</feature>
<feature type="transmembrane region" description="Helical" evidence="1">
    <location>
        <begin position="67"/>
        <end position="87"/>
    </location>
</feature>
<feature type="topological domain" description="Lumenal" evidence="1">
    <location>
        <begin position="88"/>
        <end position="98"/>
    </location>
</feature>
<feature type="transmembrane region" description="Helical" evidence="1">
    <location>
        <begin position="99"/>
        <end position="120"/>
    </location>
</feature>
<feature type="topological domain" description="Cytoplasmic" evidence="1">
    <location>
        <begin position="121"/>
        <end position="127"/>
    </location>
</feature>
<feature type="transmembrane region" description="Helical" evidence="1">
    <location>
        <begin position="128"/>
        <end position="148"/>
    </location>
</feature>
<feature type="topological domain" description="Lumenal" evidence="1">
    <location>
        <begin position="149"/>
        <end position="183"/>
    </location>
</feature>
<feature type="region of interest" description="Disordered" evidence="2">
    <location>
        <begin position="20"/>
        <end position="39"/>
    </location>
</feature>
<feature type="modified residue" description="N-acetylthreonine" evidence="1">
    <location>
        <position position="2"/>
    </location>
</feature>
<feature type="modified residue" description="Phosphoserine" evidence="1">
    <location>
        <position position="36"/>
    </location>
</feature>
<comment type="function">
    <text evidence="1">Part of the endoplasmic reticulum membrane protein complex (EMC) that enables the energy-independent insertion into endoplasmic reticulum membranes of newly synthesized membrane proteins. Preferentially accommodates proteins with transmembrane domains that are weakly hydrophobic or contain destabilizing features such as charged and aromatic residues. Involved in the cotranslational insertion of multi-pass membrane proteins in which stop-transfer membrane-anchor sequences become ER membrane spanning helices. It is also required for the post-translational insertion of tail-anchored/TA proteins in endoplasmic reticulum membranes. By mediating the proper cotranslational insertion of N-terminal transmembrane domains in an N-exo topology, with translocated N-terminus in the lumen of the ER, controls the topology of multi-pass membrane proteins like the G protein-coupled receptors. By regulating the insertion of various proteins in membranes, it is indirectly involved in many cellular processes.</text>
</comment>
<comment type="subunit">
    <text evidence="1">Component of the ER membrane protein complex (EMC).</text>
</comment>
<comment type="subcellular location">
    <subcellularLocation>
        <location evidence="1">Endoplasmic reticulum membrane</location>
        <topology evidence="1">Multi-pass membrane protein</topology>
    </subcellularLocation>
    <text evidence="1">Could also be a single-pass transmembrane protein with cytosolic N-terminus and lumenal C-terminus.</text>
</comment>
<comment type="similarity">
    <text evidence="3">Belongs to the EMC4 family.</text>
</comment>
<sequence length="183" mass="20087">MTAQGGLVANRGRRFKWAIELSGPGGGSRGRSDRGSGQGDSLYPVGYLDKQVPDTSVQETDRILVEKRCWDIALGPLKQIPMNLFIMYMAGNTISIFPTMMVCMMAWRPIQALMAISATFKMLESSSQKFLQGLVYLIGNLMGLALAVYKCQSMGLLPTHASDWLAFIEPPERMEFSGGGLLL</sequence>